<feature type="chain" id="PRO_1000085777" description="HTH-type transcriptional regulator MalT">
    <location>
        <begin position="1"/>
        <end position="901"/>
    </location>
</feature>
<feature type="domain" description="HTH luxR-type" evidence="1">
    <location>
        <begin position="829"/>
        <end position="894"/>
    </location>
</feature>
<feature type="DNA-binding region" description="H-T-H motif" evidence="1">
    <location>
        <begin position="853"/>
        <end position="872"/>
    </location>
</feature>
<feature type="binding site" evidence="1">
    <location>
        <begin position="39"/>
        <end position="46"/>
    </location>
    <ligand>
        <name>ATP</name>
        <dbReference type="ChEBI" id="CHEBI:30616"/>
    </ligand>
</feature>
<sequence>MLIPSKLSRPVRLDHTVVRERLLAKLSGANNFRLALVTSPAGYGKTTLVSQWAAGKNELGWYSLDEGDNQQERFASYLIAAIQQATGGHCSTSEAMAQKRQYASLTSLFAQLFIELAQWHRPLYLVIDDYHLITNPVIHDAMRFFLRHQPENFTLVVLSRNLPQLGIANLRVRDQLLEIGSQQLAFNHQEAKQFFDRRLSSPIEAAESSRMCDDVAGWATALQLIALSARQNHTSAHHSARRLAGINASHLSDYLVDEVLDNVDVSTRHFLLKSAILRSMNDALIVRVTGEENGQMRLEEIERQGLFLQRMDDTGEWFSYHPLFGSFLRQRCQWELAAELPEIHRAAAESWMEQGFPSEAIHHALAAGDAQMLRDILLNHAWGLFNHSELALLEESLKALPWESLLENPRLVLLQAWLMQSQHRYSEVNTLLARAEQEIKGVMDGTLHAEFNALRAQVAINDGNPEEAERLAKLALDELPLAWFYSRIVATSVHGEVLHCKGDLSQSLSLMQQTEQMARHHDVWHYALWSLIQQSEIQFAQGFLQAAWETQERAFQLIKEQHLEQLPMHEFLVRIRAQLLWAWARLDEAEASARSGIAVLSTFQPQQQLQCLTLLVQCSLARGDLDNARSQLNRLENLLGNGRYHCDWISNADKVRVIYWQLTGDKKSAANWLRHTPKPAFANNHFLQGQWRNIARAQILLGEFEPAEIVLEELNENARSLRLMSDLNRNLLLLNQLYWQSGRKNDAQRVLLDALQLANRTGFISHFVIEGEAMAQQLRQLIQLNTLPEMEQHRAQRILREINQHHRHKFAHFDEGFVERLLNHPDVPELIRTSPLTQREWQVLGLIYSGYSNEQIAGELAVAATTIKTHIRNLYQKLGVAHRQDAVQHAQQLLKMMGYGV</sequence>
<comment type="function">
    <text evidence="1">Positively regulates the transcription of the maltose regulon whose gene products are responsible for uptake and catabolism of malto-oligosaccharides. Specifically binds to the promoter region of its target genes, recognizing a short DNA motif called the MalT box.</text>
</comment>
<comment type="activity regulation">
    <text evidence="1">Activated by ATP and maltotriose, which are both required for DNA binding.</text>
</comment>
<comment type="subunit">
    <text evidence="1">Monomer in solution. Oligomerizes to an active state in the presence of the positive effectors ATP and maltotriose.</text>
</comment>
<comment type="similarity">
    <text evidence="1">Belongs to the MalT family.</text>
</comment>
<protein>
    <recommendedName>
        <fullName evidence="1">HTH-type transcriptional regulator MalT</fullName>
    </recommendedName>
    <alternativeName>
        <fullName evidence="1">ATP-dependent transcriptional activator MalT</fullName>
    </alternativeName>
</protein>
<evidence type="ECO:0000255" key="1">
    <source>
        <dbReference type="HAMAP-Rule" id="MF_01247"/>
    </source>
</evidence>
<keyword id="KW-0010">Activator</keyword>
<keyword id="KW-0067">ATP-binding</keyword>
<keyword id="KW-0119">Carbohydrate metabolism</keyword>
<keyword id="KW-0238">DNA-binding</keyword>
<keyword id="KW-0547">Nucleotide-binding</keyword>
<keyword id="KW-0804">Transcription</keyword>
<keyword id="KW-0805">Transcription regulation</keyword>
<name>MALT_SALPB</name>
<reference key="1">
    <citation type="submission" date="2007-11" db="EMBL/GenBank/DDBJ databases">
        <authorList>
            <consortium name="The Salmonella enterica serovar Paratyphi B Genome Sequencing Project"/>
            <person name="McClelland M."/>
            <person name="Sanderson E.K."/>
            <person name="Porwollik S."/>
            <person name="Spieth J."/>
            <person name="Clifton W.S."/>
            <person name="Fulton R."/>
            <person name="Cordes M."/>
            <person name="Wollam A."/>
            <person name="Shah N."/>
            <person name="Pepin K."/>
            <person name="Bhonagiri V."/>
            <person name="Nash W."/>
            <person name="Johnson M."/>
            <person name="Thiruvilangam P."/>
            <person name="Wilson R."/>
        </authorList>
    </citation>
    <scope>NUCLEOTIDE SEQUENCE [LARGE SCALE GENOMIC DNA]</scope>
    <source>
        <strain>ATCC BAA-1250 / SPB7</strain>
    </source>
</reference>
<organism>
    <name type="scientific">Salmonella paratyphi B (strain ATCC BAA-1250 / SPB7)</name>
    <dbReference type="NCBI Taxonomy" id="1016998"/>
    <lineage>
        <taxon>Bacteria</taxon>
        <taxon>Pseudomonadati</taxon>
        <taxon>Pseudomonadota</taxon>
        <taxon>Gammaproteobacteria</taxon>
        <taxon>Enterobacterales</taxon>
        <taxon>Enterobacteriaceae</taxon>
        <taxon>Salmonella</taxon>
    </lineage>
</organism>
<proteinExistence type="inferred from homology"/>
<dbReference type="EMBL" id="CP000886">
    <property type="protein sequence ID" value="ABX69692.1"/>
    <property type="molecule type" value="Genomic_DNA"/>
</dbReference>
<dbReference type="RefSeq" id="WP_000907030.1">
    <property type="nucleotide sequence ID" value="NC_010102.1"/>
</dbReference>
<dbReference type="SMR" id="A9MTT7"/>
<dbReference type="KEGG" id="spq:SPAB_04376"/>
<dbReference type="PATRIC" id="fig|1016998.12.peg.4119"/>
<dbReference type="HOGENOM" id="CLU_006325_3_0_6"/>
<dbReference type="BioCyc" id="SENT1016998:SPAB_RS17805-MONOMER"/>
<dbReference type="Proteomes" id="UP000008556">
    <property type="component" value="Chromosome"/>
</dbReference>
<dbReference type="GO" id="GO:0005524">
    <property type="term" value="F:ATP binding"/>
    <property type="evidence" value="ECO:0007669"/>
    <property type="project" value="UniProtKB-UniRule"/>
</dbReference>
<dbReference type="GO" id="GO:0003677">
    <property type="term" value="F:DNA binding"/>
    <property type="evidence" value="ECO:0007669"/>
    <property type="project" value="UniProtKB-KW"/>
</dbReference>
<dbReference type="GO" id="GO:0003700">
    <property type="term" value="F:DNA-binding transcription factor activity"/>
    <property type="evidence" value="ECO:0007669"/>
    <property type="project" value="UniProtKB-UniRule"/>
</dbReference>
<dbReference type="GO" id="GO:0045913">
    <property type="term" value="P:positive regulation of carbohydrate metabolic process"/>
    <property type="evidence" value="ECO:0007669"/>
    <property type="project" value="UniProtKB-UniRule"/>
</dbReference>
<dbReference type="GO" id="GO:0045893">
    <property type="term" value="P:positive regulation of DNA-templated transcription"/>
    <property type="evidence" value="ECO:0007669"/>
    <property type="project" value="UniProtKB-UniRule"/>
</dbReference>
<dbReference type="CDD" id="cd06170">
    <property type="entry name" value="LuxR_C_like"/>
    <property type="match status" value="1"/>
</dbReference>
<dbReference type="FunFam" id="1.10.10.10:FF:000115">
    <property type="entry name" value="HTH-type transcriptional regulator MalT"/>
    <property type="match status" value="1"/>
</dbReference>
<dbReference type="Gene3D" id="1.25.40.10">
    <property type="entry name" value="Tetratricopeptide repeat domain"/>
    <property type="match status" value="1"/>
</dbReference>
<dbReference type="Gene3D" id="1.10.10.10">
    <property type="entry name" value="Winged helix-like DNA-binding domain superfamily/Winged helix DNA-binding domain"/>
    <property type="match status" value="1"/>
</dbReference>
<dbReference type="HAMAP" id="MF_01247">
    <property type="entry name" value="HTH_type_MalT"/>
    <property type="match status" value="1"/>
</dbReference>
<dbReference type="InterPro" id="IPR027417">
    <property type="entry name" value="P-loop_NTPase"/>
</dbReference>
<dbReference type="InterPro" id="IPR016032">
    <property type="entry name" value="Sig_transdc_resp-reg_C-effctor"/>
</dbReference>
<dbReference type="InterPro" id="IPR011990">
    <property type="entry name" value="TPR-like_helical_dom_sf"/>
</dbReference>
<dbReference type="InterPro" id="IPR041617">
    <property type="entry name" value="TPR_MalT"/>
</dbReference>
<dbReference type="InterPro" id="IPR023768">
    <property type="entry name" value="Tscrpt_reg_HTH_MalT"/>
</dbReference>
<dbReference type="InterPro" id="IPR000792">
    <property type="entry name" value="Tscrpt_reg_LuxR_C"/>
</dbReference>
<dbReference type="InterPro" id="IPR036388">
    <property type="entry name" value="WH-like_DNA-bd_sf"/>
</dbReference>
<dbReference type="NCBIfam" id="NF003420">
    <property type="entry name" value="PRK04841.1"/>
    <property type="match status" value="1"/>
</dbReference>
<dbReference type="PANTHER" id="PTHR44688">
    <property type="entry name" value="DNA-BINDING TRANSCRIPTIONAL ACTIVATOR DEVR_DOSR"/>
    <property type="match status" value="1"/>
</dbReference>
<dbReference type="PANTHER" id="PTHR44688:SF16">
    <property type="entry name" value="DNA-BINDING TRANSCRIPTIONAL ACTIVATOR DEVR_DOSR"/>
    <property type="match status" value="1"/>
</dbReference>
<dbReference type="Pfam" id="PF00196">
    <property type="entry name" value="GerE"/>
    <property type="match status" value="1"/>
</dbReference>
<dbReference type="Pfam" id="PF17874">
    <property type="entry name" value="TPR_MalT"/>
    <property type="match status" value="1"/>
</dbReference>
<dbReference type="PRINTS" id="PR00038">
    <property type="entry name" value="HTHLUXR"/>
</dbReference>
<dbReference type="SMART" id="SM00421">
    <property type="entry name" value="HTH_LUXR"/>
    <property type="match status" value="1"/>
</dbReference>
<dbReference type="SUPFAM" id="SSF46894">
    <property type="entry name" value="C-terminal effector domain of the bipartite response regulators"/>
    <property type="match status" value="1"/>
</dbReference>
<dbReference type="SUPFAM" id="SSF52540">
    <property type="entry name" value="P-loop containing nucleoside triphosphate hydrolases"/>
    <property type="match status" value="1"/>
</dbReference>
<dbReference type="SUPFAM" id="SSF48452">
    <property type="entry name" value="TPR-like"/>
    <property type="match status" value="1"/>
</dbReference>
<dbReference type="PROSITE" id="PS00622">
    <property type="entry name" value="HTH_LUXR_1"/>
    <property type="match status" value="1"/>
</dbReference>
<dbReference type="PROSITE" id="PS50043">
    <property type="entry name" value="HTH_LUXR_2"/>
    <property type="match status" value="1"/>
</dbReference>
<gene>
    <name evidence="1" type="primary">malT</name>
    <name type="ordered locus">SPAB_04376</name>
</gene>
<accession>A9MTT7</accession>